<evidence type="ECO:0000255" key="1">
    <source>
        <dbReference type="HAMAP-Rule" id="MF_01187"/>
    </source>
</evidence>
<protein>
    <recommendedName>
        <fullName evidence="1">UPF0434 protein BURPS1106A_0929</fullName>
    </recommendedName>
</protein>
<gene>
    <name type="ordered locus">BURPS1106A_0929</name>
</gene>
<reference key="1">
    <citation type="journal article" date="2010" name="Genome Biol. Evol.">
        <title>Continuing evolution of Burkholderia mallei through genome reduction and large-scale rearrangements.</title>
        <authorList>
            <person name="Losada L."/>
            <person name="Ronning C.M."/>
            <person name="DeShazer D."/>
            <person name="Woods D."/>
            <person name="Fedorova N."/>
            <person name="Kim H.S."/>
            <person name="Shabalina S.A."/>
            <person name="Pearson T.R."/>
            <person name="Brinkac L."/>
            <person name="Tan P."/>
            <person name="Nandi T."/>
            <person name="Crabtree J."/>
            <person name="Badger J."/>
            <person name="Beckstrom-Sternberg S."/>
            <person name="Saqib M."/>
            <person name="Schutzer S.E."/>
            <person name="Keim P."/>
            <person name="Nierman W.C."/>
        </authorList>
    </citation>
    <scope>NUCLEOTIDE SEQUENCE [LARGE SCALE GENOMIC DNA]</scope>
    <source>
        <strain>1106a</strain>
    </source>
</reference>
<organism>
    <name type="scientific">Burkholderia pseudomallei (strain 1106a)</name>
    <dbReference type="NCBI Taxonomy" id="357348"/>
    <lineage>
        <taxon>Bacteria</taxon>
        <taxon>Pseudomonadati</taxon>
        <taxon>Pseudomonadota</taxon>
        <taxon>Betaproteobacteria</taxon>
        <taxon>Burkholderiales</taxon>
        <taxon>Burkholderiaceae</taxon>
        <taxon>Burkholderia</taxon>
        <taxon>pseudomallei group</taxon>
    </lineage>
</organism>
<feature type="chain" id="PRO_1000065834" description="UPF0434 protein BURPS1106A_0929">
    <location>
        <begin position="1"/>
        <end position="68"/>
    </location>
</feature>
<sequence>MDARLLEILVCPICKGPLHYDRGAQELVCHADKLAYPIRDGIPVMLVDEARQTVEGTPVDPAGPARGR</sequence>
<accession>A3NS89</accession>
<comment type="similarity">
    <text evidence="1">Belongs to the UPF0434 family.</text>
</comment>
<name>Y929_BURP0</name>
<dbReference type="EMBL" id="CP000572">
    <property type="protein sequence ID" value="ABN91244.1"/>
    <property type="molecule type" value="Genomic_DNA"/>
</dbReference>
<dbReference type="RefSeq" id="WP_004196455.1">
    <property type="nucleotide sequence ID" value="NC_009076.1"/>
</dbReference>
<dbReference type="SMR" id="A3NS89"/>
<dbReference type="KEGG" id="bpl:BURPS1106A_0929"/>
<dbReference type="HOGENOM" id="CLU_155659_3_0_4"/>
<dbReference type="Proteomes" id="UP000006738">
    <property type="component" value="Chromosome I"/>
</dbReference>
<dbReference type="GO" id="GO:0005829">
    <property type="term" value="C:cytosol"/>
    <property type="evidence" value="ECO:0007669"/>
    <property type="project" value="TreeGrafter"/>
</dbReference>
<dbReference type="FunFam" id="2.20.25.10:FF:000002">
    <property type="entry name" value="UPF0434 protein YcaR"/>
    <property type="match status" value="1"/>
</dbReference>
<dbReference type="Gene3D" id="2.20.25.10">
    <property type="match status" value="1"/>
</dbReference>
<dbReference type="HAMAP" id="MF_01187">
    <property type="entry name" value="UPF0434"/>
    <property type="match status" value="1"/>
</dbReference>
<dbReference type="InterPro" id="IPR005651">
    <property type="entry name" value="Trm112-like"/>
</dbReference>
<dbReference type="NCBIfam" id="TIGR01053">
    <property type="entry name" value="LSD1"/>
    <property type="match status" value="1"/>
</dbReference>
<dbReference type="PANTHER" id="PTHR33505:SF4">
    <property type="entry name" value="PROTEIN PREY, MITOCHONDRIAL"/>
    <property type="match status" value="1"/>
</dbReference>
<dbReference type="PANTHER" id="PTHR33505">
    <property type="entry name" value="ZGC:162634"/>
    <property type="match status" value="1"/>
</dbReference>
<dbReference type="Pfam" id="PF03966">
    <property type="entry name" value="Trm112p"/>
    <property type="match status" value="1"/>
</dbReference>
<dbReference type="SUPFAM" id="SSF158997">
    <property type="entry name" value="Trm112p-like"/>
    <property type="match status" value="1"/>
</dbReference>
<proteinExistence type="inferred from homology"/>